<dbReference type="EMBL" id="AM270339">
    <property type="protein sequence ID" value="CAK42395.1"/>
    <property type="molecule type" value="Genomic_DNA"/>
</dbReference>
<dbReference type="RefSeq" id="XP_001396858.1">
    <property type="nucleotide sequence ID" value="XM_001396821.1"/>
</dbReference>
<dbReference type="SMR" id="A2R5A0"/>
<dbReference type="EnsemblFungi" id="CAK42395">
    <property type="protein sequence ID" value="CAK42395"/>
    <property type="gene ID" value="An15g03200"/>
</dbReference>
<dbReference type="GeneID" id="4987921"/>
<dbReference type="KEGG" id="ang:An15g03200"/>
<dbReference type="VEuPathDB" id="FungiDB:An15g03200"/>
<dbReference type="HOGENOM" id="CLU_015166_10_3_1"/>
<dbReference type="Proteomes" id="UP000006706">
    <property type="component" value="Chromosome 3R"/>
</dbReference>
<dbReference type="GO" id="GO:0005743">
    <property type="term" value="C:mitochondrial inner membrane"/>
    <property type="evidence" value="ECO:0007669"/>
    <property type="project" value="UniProtKB-SubCell"/>
</dbReference>
<dbReference type="GO" id="GO:0055085">
    <property type="term" value="P:transmembrane transport"/>
    <property type="evidence" value="ECO:0007669"/>
    <property type="project" value="InterPro"/>
</dbReference>
<dbReference type="FunFam" id="1.50.40.10:FF:000011">
    <property type="entry name" value="Mitochondrial thiamine pyrophosphate carrier 1"/>
    <property type="match status" value="1"/>
</dbReference>
<dbReference type="Gene3D" id="1.50.40.10">
    <property type="entry name" value="Mitochondrial carrier domain"/>
    <property type="match status" value="1"/>
</dbReference>
<dbReference type="InterPro" id="IPR002067">
    <property type="entry name" value="Mit_carrier"/>
</dbReference>
<dbReference type="InterPro" id="IPR018108">
    <property type="entry name" value="Mitochondrial_sb/sol_carrier"/>
</dbReference>
<dbReference type="InterPro" id="IPR023395">
    <property type="entry name" value="Mt_carrier_dom_sf"/>
</dbReference>
<dbReference type="PANTHER" id="PTHR24089">
    <property type="entry name" value="SOLUTE CARRIER FAMILY 25"/>
    <property type="match status" value="1"/>
</dbReference>
<dbReference type="Pfam" id="PF00153">
    <property type="entry name" value="Mito_carr"/>
    <property type="match status" value="3"/>
</dbReference>
<dbReference type="PRINTS" id="PR00926">
    <property type="entry name" value="MITOCARRIER"/>
</dbReference>
<dbReference type="SUPFAM" id="SSF103506">
    <property type="entry name" value="Mitochondrial carrier"/>
    <property type="match status" value="1"/>
</dbReference>
<dbReference type="PROSITE" id="PS50920">
    <property type="entry name" value="SOLCAR"/>
    <property type="match status" value="3"/>
</dbReference>
<comment type="function">
    <text evidence="1">Mitochondrial transporter that mediates uptake of thiamine pyrophosphate (ThPP) into mitochondria.</text>
</comment>
<comment type="subcellular location">
    <subcellularLocation>
        <location evidence="1">Mitochondrion inner membrane</location>
        <topology evidence="1">Multi-pass membrane protein</topology>
    </subcellularLocation>
</comment>
<comment type="similarity">
    <text evidence="3">Belongs to the mitochondrial carrier (TC 2.A.29) family.</text>
</comment>
<gene>
    <name type="primary">tpc1</name>
    <name type="ORF">An15g03200</name>
</gene>
<keyword id="KW-0472">Membrane</keyword>
<keyword id="KW-0496">Mitochondrion</keyword>
<keyword id="KW-0999">Mitochondrion inner membrane</keyword>
<keyword id="KW-1185">Reference proteome</keyword>
<keyword id="KW-0677">Repeat</keyword>
<keyword id="KW-0812">Transmembrane</keyword>
<keyword id="KW-1133">Transmembrane helix</keyword>
<keyword id="KW-0813">Transport</keyword>
<accession>A2R5A0</accession>
<proteinExistence type="inferred from homology"/>
<organism>
    <name type="scientific">Aspergillus niger (strain ATCC MYA-4892 / CBS 513.88 / FGSC A1513)</name>
    <dbReference type="NCBI Taxonomy" id="425011"/>
    <lineage>
        <taxon>Eukaryota</taxon>
        <taxon>Fungi</taxon>
        <taxon>Dikarya</taxon>
        <taxon>Ascomycota</taxon>
        <taxon>Pezizomycotina</taxon>
        <taxon>Eurotiomycetes</taxon>
        <taxon>Eurotiomycetidae</taxon>
        <taxon>Eurotiales</taxon>
        <taxon>Aspergillaceae</taxon>
        <taxon>Aspergillus</taxon>
        <taxon>Aspergillus subgen. Circumdati</taxon>
    </lineage>
</organism>
<protein>
    <recommendedName>
        <fullName>Mitochondrial thiamine pyrophosphate carrier 1</fullName>
    </recommendedName>
</protein>
<feature type="chain" id="PRO_0000320456" description="Mitochondrial thiamine pyrophosphate carrier 1">
    <location>
        <begin position="1"/>
        <end position="321"/>
    </location>
</feature>
<feature type="transmembrane region" description="Helical; Name=1" evidence="2">
    <location>
        <begin position="12"/>
        <end position="28"/>
    </location>
</feature>
<feature type="transmembrane region" description="Helical; Name=2" evidence="2">
    <location>
        <begin position="91"/>
        <end position="107"/>
    </location>
</feature>
<feature type="transmembrane region" description="Helical; Name=3" evidence="2">
    <location>
        <begin position="126"/>
        <end position="146"/>
    </location>
</feature>
<feature type="transmembrane region" description="Helical; Name=4" evidence="2">
    <location>
        <begin position="184"/>
        <end position="200"/>
    </location>
</feature>
<feature type="transmembrane region" description="Helical; Name=5" evidence="2">
    <location>
        <begin position="221"/>
        <end position="237"/>
    </location>
</feature>
<feature type="transmembrane region" description="Helical; Name=6" evidence="2">
    <location>
        <begin position="284"/>
        <end position="301"/>
    </location>
</feature>
<feature type="repeat" description="Solcar 1">
    <location>
        <begin position="12"/>
        <end position="110"/>
    </location>
</feature>
<feature type="repeat" description="Solcar 2">
    <location>
        <begin position="120"/>
        <end position="206"/>
    </location>
</feature>
<feature type="repeat" description="Solcar 3">
    <location>
        <begin position="214"/>
        <end position="309"/>
    </location>
</feature>
<reference key="1">
    <citation type="journal article" date="2007" name="Nat. Biotechnol.">
        <title>Genome sequencing and analysis of the versatile cell factory Aspergillus niger CBS 513.88.</title>
        <authorList>
            <person name="Pel H.J."/>
            <person name="de Winde J.H."/>
            <person name="Archer D.B."/>
            <person name="Dyer P.S."/>
            <person name="Hofmann G."/>
            <person name="Schaap P.J."/>
            <person name="Turner G."/>
            <person name="de Vries R.P."/>
            <person name="Albang R."/>
            <person name="Albermann K."/>
            <person name="Andersen M.R."/>
            <person name="Bendtsen J.D."/>
            <person name="Benen J.A.E."/>
            <person name="van den Berg M."/>
            <person name="Breestraat S."/>
            <person name="Caddick M.X."/>
            <person name="Contreras R."/>
            <person name="Cornell M."/>
            <person name="Coutinho P.M."/>
            <person name="Danchin E.G.J."/>
            <person name="Debets A.J.M."/>
            <person name="Dekker P."/>
            <person name="van Dijck P.W.M."/>
            <person name="van Dijk A."/>
            <person name="Dijkhuizen L."/>
            <person name="Driessen A.J.M."/>
            <person name="d'Enfert C."/>
            <person name="Geysens S."/>
            <person name="Goosen C."/>
            <person name="Groot G.S.P."/>
            <person name="de Groot P.W.J."/>
            <person name="Guillemette T."/>
            <person name="Henrissat B."/>
            <person name="Herweijer M."/>
            <person name="van den Hombergh J.P.T.W."/>
            <person name="van den Hondel C.A.M.J.J."/>
            <person name="van der Heijden R.T.J.M."/>
            <person name="van der Kaaij R.M."/>
            <person name="Klis F.M."/>
            <person name="Kools H.J."/>
            <person name="Kubicek C.P."/>
            <person name="van Kuyk P.A."/>
            <person name="Lauber J."/>
            <person name="Lu X."/>
            <person name="van der Maarel M.J.E.C."/>
            <person name="Meulenberg R."/>
            <person name="Menke H."/>
            <person name="Mortimer M.A."/>
            <person name="Nielsen J."/>
            <person name="Oliver S.G."/>
            <person name="Olsthoorn M."/>
            <person name="Pal K."/>
            <person name="van Peij N.N.M.E."/>
            <person name="Ram A.F.J."/>
            <person name="Rinas U."/>
            <person name="Roubos J.A."/>
            <person name="Sagt C.M.J."/>
            <person name="Schmoll M."/>
            <person name="Sun J."/>
            <person name="Ussery D."/>
            <person name="Varga J."/>
            <person name="Vervecken W."/>
            <person name="van de Vondervoort P.J.J."/>
            <person name="Wedler H."/>
            <person name="Woesten H.A.B."/>
            <person name="Zeng A.-P."/>
            <person name="van Ooyen A.J.J."/>
            <person name="Visser J."/>
            <person name="Stam H."/>
        </authorList>
    </citation>
    <scope>NUCLEOTIDE SEQUENCE [LARGE SCALE GENOMIC DNA]</scope>
    <source>
        <strain>ATCC MYA-4892 / CBS 513.88 / FGSC A1513</strain>
    </source>
</reference>
<evidence type="ECO:0000250" key="1"/>
<evidence type="ECO:0000255" key="2"/>
<evidence type="ECO:0000305" key="3"/>
<name>TPC1_ASPNC</name>
<sequence>MSAGGEHLKDEGTRRQVVLAGGIAGLVSRFCVAPLDVVKIRLQLQIHSLSDPISHRDVTGPIYKGTLSTMRDIIRQEGITGLWKGNIPAELMYVCYGVIQFSAYRTTTQALAQLDTYRLPPSAESFVAGATAGGLATASTYPLDLLRTRFAAQGTDRVYTSLMSSVRDIARNEGYAGFFRGCSAAVGQIVPYMGLFFATYEALRPPLAQYQDLPFGSGDAAAGVIASVSSKTVMFPLDLIRKRLQVQGPTRQLYIHRNIPEYQGVFNTMKLILRTQGIRGLYRGLTVSLFKAAPASAVTMWTYETSLRLLQDMEVATSKED</sequence>